<gene>
    <name evidence="4" type="primary">KIN7N</name>
    <name evidence="8" type="synonym">ZCF125</name>
    <name evidence="5" type="ordered locus">At1g59540</name>
    <name evidence="6" type="ORF">T30E16.9</name>
    <name evidence="7" type="ORF">T4M14.11</name>
</gene>
<comment type="alternative products">
    <event type="alternative splicing"/>
    <isoform>
        <id>Q9S7P3-1</id>
        <name>1</name>
        <sequence type="displayed"/>
    </isoform>
    <text>A number of isoforms are produced. According to EST sequences.</text>
</comment>
<comment type="similarity">
    <text evidence="3">Belongs to the TRAFAC class myosin-kinesin ATPase superfamily. Kinesin family. KIN-7 subfamily.</text>
</comment>
<comment type="sequence caution" evidence="4">
    <conflict type="erroneous gene model prediction">
        <sequence resource="EMBL-CDS" id="AAF79747"/>
    </conflict>
</comment>
<comment type="sequence caution" evidence="4">
    <conflict type="erroneous gene model prediction">
        <sequence resource="EMBL-CDS" id="AAK62792"/>
    </conflict>
</comment>
<name>KN7N_ARATH</name>
<proteinExistence type="evidence at transcript level"/>
<evidence type="ECO:0000255" key="1"/>
<evidence type="ECO:0000255" key="2">
    <source>
        <dbReference type="PROSITE-ProRule" id="PRU00283"/>
    </source>
</evidence>
<evidence type="ECO:0000303" key="3">
    <source>
    </source>
</evidence>
<evidence type="ECO:0000305" key="4"/>
<evidence type="ECO:0000312" key="5">
    <source>
        <dbReference type="Araport" id="AT1G59540"/>
    </source>
</evidence>
<evidence type="ECO:0000312" key="6">
    <source>
        <dbReference type="EMBL" id="AAF79747.1"/>
    </source>
</evidence>
<evidence type="ECO:0000312" key="7">
    <source>
        <dbReference type="EMBL" id="AAK62792.1"/>
    </source>
</evidence>
<evidence type="ECO:0000312" key="8">
    <source>
        <dbReference type="EMBL" id="BAA88114.1"/>
    </source>
</evidence>
<protein>
    <recommendedName>
        <fullName evidence="4">Kinesin-like protein KIN-7N</fullName>
    </recommendedName>
</protein>
<accession>Q9S7P3</accession>
<accession>Q94HV9</accession>
<accession>Q9LQ62</accession>
<dbReference type="EMBL" id="AB028468">
    <property type="protein sequence ID" value="BAA88112.1"/>
    <property type="molecule type" value="mRNA"/>
</dbReference>
<dbReference type="EMBL" id="AB028470">
    <property type="protein sequence ID" value="BAA88114.1"/>
    <property type="molecule type" value="Genomic_DNA"/>
</dbReference>
<dbReference type="EMBL" id="AC009317">
    <property type="protein sequence ID" value="AAF79747.1"/>
    <property type="status" value="ALT_SEQ"/>
    <property type="molecule type" value="Genomic_DNA"/>
</dbReference>
<dbReference type="EMBL" id="AC027036">
    <property type="protein sequence ID" value="AAK62792.1"/>
    <property type="status" value="ALT_SEQ"/>
    <property type="molecule type" value="Genomic_DNA"/>
</dbReference>
<dbReference type="EMBL" id="CP002684">
    <property type="protein sequence ID" value="AEE33586.1"/>
    <property type="molecule type" value="Genomic_DNA"/>
</dbReference>
<dbReference type="PIR" id="D96619">
    <property type="entry name" value="D96619"/>
</dbReference>
<dbReference type="PIR" id="T52425">
    <property type="entry name" value="T52425"/>
</dbReference>
<dbReference type="RefSeq" id="NP_564744.1">
    <molecule id="Q9S7P3-1"/>
    <property type="nucleotide sequence ID" value="NM_104648.4"/>
</dbReference>
<dbReference type="SMR" id="Q9S7P3"/>
<dbReference type="FunCoup" id="Q9S7P3">
    <property type="interactions" value="475"/>
</dbReference>
<dbReference type="STRING" id="3702.Q9S7P3"/>
<dbReference type="iPTMnet" id="Q9S7P3"/>
<dbReference type="PaxDb" id="3702-AT1G59540.1"/>
<dbReference type="ProteomicsDB" id="237141">
    <molecule id="Q9S7P3-1"/>
</dbReference>
<dbReference type="EnsemblPlants" id="AT1G59540.1">
    <molecule id="Q9S7P3-1"/>
    <property type="protein sequence ID" value="AT1G59540.1"/>
    <property type="gene ID" value="AT1G59540"/>
</dbReference>
<dbReference type="GeneID" id="842245"/>
<dbReference type="Gramene" id="AT1G59540.1">
    <molecule id="Q9S7P3-1"/>
    <property type="protein sequence ID" value="AT1G59540.1"/>
    <property type="gene ID" value="AT1G59540"/>
</dbReference>
<dbReference type="KEGG" id="ath:AT1G59540"/>
<dbReference type="Araport" id="AT1G59540"/>
<dbReference type="TAIR" id="AT1G59540">
    <property type="gene designation" value="ZCF125"/>
</dbReference>
<dbReference type="eggNOG" id="KOG0242">
    <property type="taxonomic scope" value="Eukaryota"/>
</dbReference>
<dbReference type="HOGENOM" id="CLU_001485_25_1_1"/>
<dbReference type="InParanoid" id="Q9S7P3"/>
<dbReference type="OMA" id="ACWKEKL"/>
<dbReference type="PhylomeDB" id="Q9S7P3"/>
<dbReference type="PRO" id="PR:Q9S7P3"/>
<dbReference type="Proteomes" id="UP000006548">
    <property type="component" value="Chromosome 1"/>
</dbReference>
<dbReference type="ExpressionAtlas" id="Q9S7P3">
    <property type="expression patterns" value="baseline and differential"/>
</dbReference>
<dbReference type="GO" id="GO:0005874">
    <property type="term" value="C:microtubule"/>
    <property type="evidence" value="ECO:0007669"/>
    <property type="project" value="UniProtKB-KW"/>
</dbReference>
<dbReference type="GO" id="GO:0005524">
    <property type="term" value="F:ATP binding"/>
    <property type="evidence" value="ECO:0007669"/>
    <property type="project" value="UniProtKB-KW"/>
</dbReference>
<dbReference type="GO" id="GO:0008017">
    <property type="term" value="F:microtubule binding"/>
    <property type="evidence" value="ECO:0007669"/>
    <property type="project" value="InterPro"/>
</dbReference>
<dbReference type="GO" id="GO:0003777">
    <property type="term" value="F:microtubule motor activity"/>
    <property type="evidence" value="ECO:0007669"/>
    <property type="project" value="InterPro"/>
</dbReference>
<dbReference type="GO" id="GO:0007018">
    <property type="term" value="P:microtubule-based movement"/>
    <property type="evidence" value="ECO:0007669"/>
    <property type="project" value="InterPro"/>
</dbReference>
<dbReference type="CDD" id="cd01374">
    <property type="entry name" value="KISc_CENP_E"/>
    <property type="match status" value="1"/>
</dbReference>
<dbReference type="FunFam" id="3.40.850.10:FF:000026">
    <property type="entry name" value="Centromere-associated protein E"/>
    <property type="match status" value="1"/>
</dbReference>
<dbReference type="Gene3D" id="3.40.850.10">
    <property type="entry name" value="Kinesin motor domain"/>
    <property type="match status" value="1"/>
</dbReference>
<dbReference type="InterPro" id="IPR027640">
    <property type="entry name" value="Kinesin-like_fam"/>
</dbReference>
<dbReference type="InterPro" id="IPR019821">
    <property type="entry name" value="Kinesin_motor_CS"/>
</dbReference>
<dbReference type="InterPro" id="IPR001752">
    <property type="entry name" value="Kinesin_motor_dom"/>
</dbReference>
<dbReference type="InterPro" id="IPR036961">
    <property type="entry name" value="Kinesin_motor_dom_sf"/>
</dbReference>
<dbReference type="InterPro" id="IPR027417">
    <property type="entry name" value="P-loop_NTPase"/>
</dbReference>
<dbReference type="PANTHER" id="PTHR47968">
    <property type="entry name" value="CENTROMERE PROTEIN E"/>
    <property type="match status" value="1"/>
</dbReference>
<dbReference type="PANTHER" id="PTHR47968:SF36">
    <property type="entry name" value="KINESIN HEAVY CHAIN ISOFORM X1"/>
    <property type="match status" value="1"/>
</dbReference>
<dbReference type="Pfam" id="PF00225">
    <property type="entry name" value="Kinesin"/>
    <property type="match status" value="1"/>
</dbReference>
<dbReference type="PRINTS" id="PR00380">
    <property type="entry name" value="KINESINHEAVY"/>
</dbReference>
<dbReference type="SMART" id="SM00129">
    <property type="entry name" value="KISc"/>
    <property type="match status" value="1"/>
</dbReference>
<dbReference type="SUPFAM" id="SSF52540">
    <property type="entry name" value="P-loop containing nucleoside triphosphate hydrolases"/>
    <property type="match status" value="1"/>
</dbReference>
<dbReference type="PROSITE" id="PS00411">
    <property type="entry name" value="KINESIN_MOTOR_1"/>
    <property type="match status" value="1"/>
</dbReference>
<dbReference type="PROSITE" id="PS50067">
    <property type="entry name" value="KINESIN_MOTOR_2"/>
    <property type="match status" value="1"/>
</dbReference>
<feature type="chain" id="PRO_0000436472" description="Kinesin-like protein KIN-7N">
    <location>
        <begin position="1"/>
        <end position="823"/>
    </location>
</feature>
<feature type="domain" description="Kinesin motor" evidence="2">
    <location>
        <begin position="3"/>
        <end position="325"/>
    </location>
</feature>
<feature type="coiled-coil region" evidence="1">
    <location>
        <begin position="341"/>
        <end position="414"/>
    </location>
</feature>
<feature type="coiled-coil region" evidence="1">
    <location>
        <begin position="527"/>
        <end position="557"/>
    </location>
</feature>
<feature type="coiled-coil region" evidence="1">
    <location>
        <begin position="696"/>
        <end position="786"/>
    </location>
</feature>
<feature type="binding site" evidence="2">
    <location>
        <begin position="83"/>
        <end position="90"/>
    </location>
    <ligand>
        <name>ATP</name>
        <dbReference type="ChEBI" id="CHEBI:30616"/>
    </ligand>
</feature>
<organism>
    <name type="scientific">Arabidopsis thaliana</name>
    <name type="common">Mouse-ear cress</name>
    <dbReference type="NCBI Taxonomy" id="3702"/>
    <lineage>
        <taxon>Eukaryota</taxon>
        <taxon>Viridiplantae</taxon>
        <taxon>Streptophyta</taxon>
        <taxon>Embryophyta</taxon>
        <taxon>Tracheophyta</taxon>
        <taxon>Spermatophyta</taxon>
        <taxon>Magnoliopsida</taxon>
        <taxon>eudicotyledons</taxon>
        <taxon>Gunneridae</taxon>
        <taxon>Pentapetalae</taxon>
        <taxon>rosids</taxon>
        <taxon>malvids</taxon>
        <taxon>Brassicales</taxon>
        <taxon>Brassicaceae</taxon>
        <taxon>Camelineae</taxon>
        <taxon>Arabidopsis</taxon>
    </lineage>
</organism>
<sequence>MEKICVAVRVRPPAPENGASLWKVEDNRISLHKSLDTPITTASHAFDHVFDESSTNASVYELLTKDIIHAAVEGFNGTAFAYGQTSSGKTFTMTGSETDPGIIRRSVRDVFERIHMISDREFLIRVSYMEIYNEEINDLLAVENQRLQIHEHLERGVFVAGLKEEIVSDAEQILKLIDSGEVNRHFGETNMNVHSSRSHTIFRMVIESRGKDNSSSDAIRVSVLNLVDLAGSERIAKTGAGGVRLQEGKYINKSLMILGNVINKLSDSTKLRAHIPYRDSKLTRILQPALGGNAKTCIICTIAPEEHHIEESKGTLQFASRAKRITNCAQVNEILTDAALLKRQKLEIEELRMKLQGSHAEVLEQEILNLSNQMLKYELECERLKTQLEEEKRKQKEQENCIKEQQMKIENLNNFVTNSDFKRNQSEDFIISRKTPDGLCNVNDTSDVPGTPCFKSASRSFVVARSNNYSGLSDFSPMVHSLGDVADEDTWMKLNKGFVADLDQIQFTPAVKCQPTPLSIATTECPRENHSEVEDLKSRIQLLTNENDSLQVKFNEQVLLSNNLMQEMSELKQETLTVKEIPNRLSESVANCKDVYKDVIVTMKSLITDKESPTANLLLGTTEITTSLLATLETQFSMIMDGQKTGSSIDHPLSDHWETLRVNLKNTTTLLLSDAQAKDEFLNSHNKGQETAALEEKKLKSELIIIKERYNELEKELCLDKQLLEASRESHEKLIKEVQFLKEERDSLDRKISQSTQRLRVIASDKENALKDLNVEVKRRKDMEEEIKHISIAFATRHKSFVSFHSEIKSKMQKLTTQNSKAP</sequence>
<keyword id="KW-0025">Alternative splicing</keyword>
<keyword id="KW-0067">ATP-binding</keyword>
<keyword id="KW-0175">Coiled coil</keyword>
<keyword id="KW-0493">Microtubule</keyword>
<keyword id="KW-0505">Motor protein</keyword>
<keyword id="KW-0547">Nucleotide-binding</keyword>
<keyword id="KW-1185">Reference proteome</keyword>
<reference key="1">
    <citation type="journal article" date="1999" name="Gene">
        <title>Isolation and analysis of cDNA within a 300 kb Arabidopsis thaliana genomic region located around the 100 map unit of chromosome 1.</title>
        <authorList>
            <person name="Kato A."/>
            <person name="Suzuki M."/>
            <person name="Kuwahara A."/>
            <person name="Ooe H."/>
            <person name="Higano-Inaba K."/>
            <person name="Komeda Y."/>
        </authorList>
    </citation>
    <scope>NUCLEOTIDE SEQUENCE [GENOMIC DNA / MRNA]</scope>
    <source>
        <strain>cv. Columbia</strain>
    </source>
</reference>
<reference key="2">
    <citation type="journal article" date="2000" name="Nature">
        <title>Sequence and analysis of chromosome 1 of the plant Arabidopsis thaliana.</title>
        <authorList>
            <person name="Theologis A."/>
            <person name="Ecker J.R."/>
            <person name="Palm C.J."/>
            <person name="Federspiel N.A."/>
            <person name="Kaul S."/>
            <person name="White O."/>
            <person name="Alonso J."/>
            <person name="Altafi H."/>
            <person name="Araujo R."/>
            <person name="Bowman C.L."/>
            <person name="Brooks S.Y."/>
            <person name="Buehler E."/>
            <person name="Chan A."/>
            <person name="Chao Q."/>
            <person name="Chen H."/>
            <person name="Cheuk R.F."/>
            <person name="Chin C.W."/>
            <person name="Chung M.K."/>
            <person name="Conn L."/>
            <person name="Conway A.B."/>
            <person name="Conway A.R."/>
            <person name="Creasy T.H."/>
            <person name="Dewar K."/>
            <person name="Dunn P."/>
            <person name="Etgu P."/>
            <person name="Feldblyum T.V."/>
            <person name="Feng J.-D."/>
            <person name="Fong B."/>
            <person name="Fujii C.Y."/>
            <person name="Gill J.E."/>
            <person name="Goldsmith A.D."/>
            <person name="Haas B."/>
            <person name="Hansen N.F."/>
            <person name="Hughes B."/>
            <person name="Huizar L."/>
            <person name="Hunter J.L."/>
            <person name="Jenkins J."/>
            <person name="Johnson-Hopson C."/>
            <person name="Khan S."/>
            <person name="Khaykin E."/>
            <person name="Kim C.J."/>
            <person name="Koo H.L."/>
            <person name="Kremenetskaia I."/>
            <person name="Kurtz D.B."/>
            <person name="Kwan A."/>
            <person name="Lam B."/>
            <person name="Langin-Hooper S."/>
            <person name="Lee A."/>
            <person name="Lee J.M."/>
            <person name="Lenz C.A."/>
            <person name="Li J.H."/>
            <person name="Li Y.-P."/>
            <person name="Lin X."/>
            <person name="Liu S.X."/>
            <person name="Liu Z.A."/>
            <person name="Luros J.S."/>
            <person name="Maiti R."/>
            <person name="Marziali A."/>
            <person name="Militscher J."/>
            <person name="Miranda M."/>
            <person name="Nguyen M."/>
            <person name="Nierman W.C."/>
            <person name="Osborne B.I."/>
            <person name="Pai G."/>
            <person name="Peterson J."/>
            <person name="Pham P.K."/>
            <person name="Rizzo M."/>
            <person name="Rooney T."/>
            <person name="Rowley D."/>
            <person name="Sakano H."/>
            <person name="Salzberg S.L."/>
            <person name="Schwartz J.R."/>
            <person name="Shinn P."/>
            <person name="Southwick A.M."/>
            <person name="Sun H."/>
            <person name="Tallon L.J."/>
            <person name="Tambunga G."/>
            <person name="Toriumi M.J."/>
            <person name="Town C.D."/>
            <person name="Utterback T."/>
            <person name="Van Aken S."/>
            <person name="Vaysberg M."/>
            <person name="Vysotskaia V.S."/>
            <person name="Walker M."/>
            <person name="Wu D."/>
            <person name="Yu G."/>
            <person name="Fraser C.M."/>
            <person name="Venter J.C."/>
            <person name="Davis R.W."/>
        </authorList>
    </citation>
    <scope>NUCLEOTIDE SEQUENCE [LARGE SCALE GENOMIC DNA]</scope>
    <source>
        <strain>cv. Columbia</strain>
    </source>
</reference>
<reference key="3">
    <citation type="journal article" date="2017" name="Plant J.">
        <title>Araport11: a complete reannotation of the Arabidopsis thaliana reference genome.</title>
        <authorList>
            <person name="Cheng C.Y."/>
            <person name="Krishnakumar V."/>
            <person name="Chan A.P."/>
            <person name="Thibaud-Nissen F."/>
            <person name="Schobel S."/>
            <person name="Town C.D."/>
        </authorList>
    </citation>
    <scope>GENOME REANNOTATION</scope>
    <source>
        <strain>cv. Columbia</strain>
    </source>
</reference>
<reference key="4">
    <citation type="journal article" date="2001" name="BMC Genomics">
        <title>Kinesins in the Arabidopsis genome: a comparative analysis among eukaryotes.</title>
        <authorList>
            <person name="Reddy A.S."/>
            <person name="Day I.S."/>
        </authorList>
    </citation>
    <scope>GENE FAMILY</scope>
</reference>
<reference key="5">
    <citation type="journal article" date="2006" name="BMC Genomics">
        <title>Comprehensive comparative analysis of kinesins in photosynthetic eukaryotes.</title>
        <authorList>
            <person name="Richardson D.N."/>
            <person name="Simmons M.P."/>
            <person name="Reddy A.S."/>
        </authorList>
    </citation>
    <scope>GENE FAMILY</scope>
    <scope>NOMENCLATURE</scope>
</reference>
<reference key="6">
    <citation type="journal article" date="2012" name="Protoplasma">
        <title>Functions of the Arabidopsis kinesin superfamily of microtubule-based motor proteins.</title>
        <authorList>
            <person name="Zhu C."/>
            <person name="Dixit R."/>
        </authorList>
    </citation>
    <scope>REVIEW</scope>
</reference>